<evidence type="ECO:0000255" key="1">
    <source>
        <dbReference type="HAMAP-Rule" id="MF_00041"/>
    </source>
</evidence>
<comment type="catalytic activity">
    <reaction evidence="1">
        <text>tRNA(Cys) + L-cysteine + ATP = L-cysteinyl-tRNA(Cys) + AMP + diphosphate</text>
        <dbReference type="Rhea" id="RHEA:17773"/>
        <dbReference type="Rhea" id="RHEA-COMP:9661"/>
        <dbReference type="Rhea" id="RHEA-COMP:9679"/>
        <dbReference type="ChEBI" id="CHEBI:30616"/>
        <dbReference type="ChEBI" id="CHEBI:33019"/>
        <dbReference type="ChEBI" id="CHEBI:35235"/>
        <dbReference type="ChEBI" id="CHEBI:78442"/>
        <dbReference type="ChEBI" id="CHEBI:78517"/>
        <dbReference type="ChEBI" id="CHEBI:456215"/>
        <dbReference type="EC" id="6.1.1.16"/>
    </reaction>
</comment>
<comment type="cofactor">
    <cofactor evidence="1">
        <name>Zn(2+)</name>
        <dbReference type="ChEBI" id="CHEBI:29105"/>
    </cofactor>
    <text evidence="1">Binds 1 zinc ion per subunit.</text>
</comment>
<comment type="subunit">
    <text evidence="1">Monomer.</text>
</comment>
<comment type="subcellular location">
    <subcellularLocation>
        <location evidence="1">Cytoplasm</location>
    </subcellularLocation>
</comment>
<comment type="similarity">
    <text evidence="1">Belongs to the class-I aminoacyl-tRNA synthetase family.</text>
</comment>
<organism>
    <name type="scientific">Bordetella bronchiseptica (strain ATCC BAA-588 / NCTC 13252 / RB50)</name>
    <name type="common">Alcaligenes bronchisepticus</name>
    <dbReference type="NCBI Taxonomy" id="257310"/>
    <lineage>
        <taxon>Bacteria</taxon>
        <taxon>Pseudomonadati</taxon>
        <taxon>Pseudomonadota</taxon>
        <taxon>Betaproteobacteria</taxon>
        <taxon>Burkholderiales</taxon>
        <taxon>Alcaligenaceae</taxon>
        <taxon>Bordetella</taxon>
    </lineage>
</organism>
<accession>Q7WLL0</accession>
<sequence>MLHIYNTLSRTKEPFKPAHAGQVRMYVCGMTVYDYCHLGHARMLVAFDVVQRWLRASGLAVDYVRNITDIDDKIIRRAVETGRRIGEVTEYYIAAMHADERALGVQPPDREPRATQYVGEMLDIIGRLESKGLAYRAEDGDVNYAVRGFADYGKLSGKSLDDLRAGERVAVGSAKRDPLDFVLWKSAKPQEPDDTKWESPYGLGRPGWHIECSAMSKTLLGLPLDIHGGGPDLKFPHHENEIAQTEGAFGGALANVWMHCGPLMVDADKMSKSLGNFRTIRQTIAQGALSDTQAEYAVNPREAEMLRFFIVRNHYRSPQNYAPDNLVDAQNALDRLYQALQNTAADGQGVDWSEPQAQAFKAAMDDDFNSSGAVAALFELASEANRTGSARAAGQLKALGAVLGLLQQDPPAYFQSPTRYSAAAREQGAPAAALDAAAIEARIAERAAAKAARDFARADAIRAELRAAGVELDDKPGGLTQWRRA</sequence>
<dbReference type="EC" id="6.1.1.16" evidence="1"/>
<dbReference type="EMBL" id="BX640442">
    <property type="protein sequence ID" value="CAE32232.1"/>
    <property type="molecule type" value="Genomic_DNA"/>
</dbReference>
<dbReference type="RefSeq" id="WP_003810003.1">
    <property type="nucleotide sequence ID" value="NC_002927.3"/>
</dbReference>
<dbReference type="SMR" id="Q7WLL0"/>
<dbReference type="GeneID" id="93204060"/>
<dbReference type="KEGG" id="bbr:BB1735"/>
<dbReference type="eggNOG" id="COG0215">
    <property type="taxonomic scope" value="Bacteria"/>
</dbReference>
<dbReference type="HOGENOM" id="CLU_013528_0_1_4"/>
<dbReference type="Proteomes" id="UP000001027">
    <property type="component" value="Chromosome"/>
</dbReference>
<dbReference type="GO" id="GO:0005829">
    <property type="term" value="C:cytosol"/>
    <property type="evidence" value="ECO:0007669"/>
    <property type="project" value="TreeGrafter"/>
</dbReference>
<dbReference type="GO" id="GO:0005524">
    <property type="term" value="F:ATP binding"/>
    <property type="evidence" value="ECO:0007669"/>
    <property type="project" value="UniProtKB-UniRule"/>
</dbReference>
<dbReference type="GO" id="GO:0004817">
    <property type="term" value="F:cysteine-tRNA ligase activity"/>
    <property type="evidence" value="ECO:0007669"/>
    <property type="project" value="UniProtKB-UniRule"/>
</dbReference>
<dbReference type="GO" id="GO:0008270">
    <property type="term" value="F:zinc ion binding"/>
    <property type="evidence" value="ECO:0007669"/>
    <property type="project" value="UniProtKB-UniRule"/>
</dbReference>
<dbReference type="GO" id="GO:0006423">
    <property type="term" value="P:cysteinyl-tRNA aminoacylation"/>
    <property type="evidence" value="ECO:0007669"/>
    <property type="project" value="UniProtKB-UniRule"/>
</dbReference>
<dbReference type="CDD" id="cd00672">
    <property type="entry name" value="CysRS_core"/>
    <property type="match status" value="1"/>
</dbReference>
<dbReference type="Gene3D" id="1.20.120.1910">
    <property type="entry name" value="Cysteine-tRNA ligase, C-terminal anti-codon recognition domain"/>
    <property type="match status" value="1"/>
</dbReference>
<dbReference type="Gene3D" id="3.40.50.620">
    <property type="entry name" value="HUPs"/>
    <property type="match status" value="1"/>
</dbReference>
<dbReference type="HAMAP" id="MF_00041">
    <property type="entry name" value="Cys_tRNA_synth"/>
    <property type="match status" value="1"/>
</dbReference>
<dbReference type="InterPro" id="IPR015803">
    <property type="entry name" value="Cys-tRNA-ligase"/>
</dbReference>
<dbReference type="InterPro" id="IPR015273">
    <property type="entry name" value="Cys-tRNA-synt_Ia_DALR"/>
</dbReference>
<dbReference type="InterPro" id="IPR024909">
    <property type="entry name" value="Cys-tRNA/MSH_ligase"/>
</dbReference>
<dbReference type="InterPro" id="IPR014729">
    <property type="entry name" value="Rossmann-like_a/b/a_fold"/>
</dbReference>
<dbReference type="InterPro" id="IPR032678">
    <property type="entry name" value="tRNA-synt_1_cat_dom"/>
</dbReference>
<dbReference type="InterPro" id="IPR009080">
    <property type="entry name" value="tRNAsynth_Ia_anticodon-bd"/>
</dbReference>
<dbReference type="NCBIfam" id="TIGR00435">
    <property type="entry name" value="cysS"/>
    <property type="match status" value="1"/>
</dbReference>
<dbReference type="PANTHER" id="PTHR10890:SF3">
    <property type="entry name" value="CYSTEINE--TRNA LIGASE, CYTOPLASMIC"/>
    <property type="match status" value="1"/>
</dbReference>
<dbReference type="PANTHER" id="PTHR10890">
    <property type="entry name" value="CYSTEINYL-TRNA SYNTHETASE"/>
    <property type="match status" value="1"/>
</dbReference>
<dbReference type="Pfam" id="PF09190">
    <property type="entry name" value="DALR_2"/>
    <property type="match status" value="1"/>
</dbReference>
<dbReference type="Pfam" id="PF01406">
    <property type="entry name" value="tRNA-synt_1e"/>
    <property type="match status" value="1"/>
</dbReference>
<dbReference type="PRINTS" id="PR00983">
    <property type="entry name" value="TRNASYNTHCYS"/>
</dbReference>
<dbReference type="SMART" id="SM00840">
    <property type="entry name" value="DALR_2"/>
    <property type="match status" value="1"/>
</dbReference>
<dbReference type="SUPFAM" id="SSF47323">
    <property type="entry name" value="Anticodon-binding domain of a subclass of class I aminoacyl-tRNA synthetases"/>
    <property type="match status" value="1"/>
</dbReference>
<dbReference type="SUPFAM" id="SSF52374">
    <property type="entry name" value="Nucleotidylyl transferase"/>
    <property type="match status" value="1"/>
</dbReference>
<reference key="1">
    <citation type="journal article" date="2003" name="Nat. Genet.">
        <title>Comparative analysis of the genome sequences of Bordetella pertussis, Bordetella parapertussis and Bordetella bronchiseptica.</title>
        <authorList>
            <person name="Parkhill J."/>
            <person name="Sebaihia M."/>
            <person name="Preston A."/>
            <person name="Murphy L.D."/>
            <person name="Thomson N.R."/>
            <person name="Harris D.E."/>
            <person name="Holden M.T.G."/>
            <person name="Churcher C.M."/>
            <person name="Bentley S.D."/>
            <person name="Mungall K.L."/>
            <person name="Cerdeno-Tarraga A.-M."/>
            <person name="Temple L."/>
            <person name="James K.D."/>
            <person name="Harris B."/>
            <person name="Quail M.A."/>
            <person name="Achtman M."/>
            <person name="Atkin R."/>
            <person name="Baker S."/>
            <person name="Basham D."/>
            <person name="Bason N."/>
            <person name="Cherevach I."/>
            <person name="Chillingworth T."/>
            <person name="Collins M."/>
            <person name="Cronin A."/>
            <person name="Davis P."/>
            <person name="Doggett J."/>
            <person name="Feltwell T."/>
            <person name="Goble A."/>
            <person name="Hamlin N."/>
            <person name="Hauser H."/>
            <person name="Holroyd S."/>
            <person name="Jagels K."/>
            <person name="Leather S."/>
            <person name="Moule S."/>
            <person name="Norberczak H."/>
            <person name="O'Neil S."/>
            <person name="Ormond D."/>
            <person name="Price C."/>
            <person name="Rabbinowitsch E."/>
            <person name="Rutter S."/>
            <person name="Sanders M."/>
            <person name="Saunders D."/>
            <person name="Seeger K."/>
            <person name="Sharp S."/>
            <person name="Simmonds M."/>
            <person name="Skelton J."/>
            <person name="Squares R."/>
            <person name="Squares S."/>
            <person name="Stevens K."/>
            <person name="Unwin L."/>
            <person name="Whitehead S."/>
            <person name="Barrell B.G."/>
            <person name="Maskell D.J."/>
        </authorList>
    </citation>
    <scope>NUCLEOTIDE SEQUENCE [LARGE SCALE GENOMIC DNA]</scope>
    <source>
        <strain>ATCC BAA-588 / NCTC 13252 / RB50</strain>
    </source>
</reference>
<feature type="chain" id="PRO_0000159358" description="Cysteine--tRNA ligase">
    <location>
        <begin position="1"/>
        <end position="485"/>
    </location>
</feature>
<feature type="short sequence motif" description="'HIGH' region">
    <location>
        <begin position="30"/>
        <end position="40"/>
    </location>
</feature>
<feature type="short sequence motif" description="'KMSKS' region">
    <location>
        <begin position="269"/>
        <end position="273"/>
    </location>
</feature>
<feature type="binding site" evidence="1">
    <location>
        <position position="28"/>
    </location>
    <ligand>
        <name>Zn(2+)</name>
        <dbReference type="ChEBI" id="CHEBI:29105"/>
    </ligand>
</feature>
<feature type="binding site" evidence="1">
    <location>
        <position position="212"/>
    </location>
    <ligand>
        <name>Zn(2+)</name>
        <dbReference type="ChEBI" id="CHEBI:29105"/>
    </ligand>
</feature>
<feature type="binding site" evidence="1">
    <location>
        <position position="237"/>
    </location>
    <ligand>
        <name>Zn(2+)</name>
        <dbReference type="ChEBI" id="CHEBI:29105"/>
    </ligand>
</feature>
<feature type="binding site" evidence="1">
    <location>
        <position position="241"/>
    </location>
    <ligand>
        <name>Zn(2+)</name>
        <dbReference type="ChEBI" id="CHEBI:29105"/>
    </ligand>
</feature>
<feature type="binding site" evidence="1">
    <location>
        <position position="272"/>
    </location>
    <ligand>
        <name>ATP</name>
        <dbReference type="ChEBI" id="CHEBI:30616"/>
    </ligand>
</feature>
<protein>
    <recommendedName>
        <fullName evidence="1">Cysteine--tRNA ligase</fullName>
        <ecNumber evidence="1">6.1.1.16</ecNumber>
    </recommendedName>
    <alternativeName>
        <fullName evidence="1">Cysteinyl-tRNA synthetase</fullName>
        <shortName evidence="1">CysRS</shortName>
    </alternativeName>
</protein>
<name>SYC_BORBR</name>
<gene>
    <name evidence="1" type="primary">cysS</name>
    <name type="ordered locus">BB1735</name>
</gene>
<keyword id="KW-0030">Aminoacyl-tRNA synthetase</keyword>
<keyword id="KW-0067">ATP-binding</keyword>
<keyword id="KW-0963">Cytoplasm</keyword>
<keyword id="KW-0436">Ligase</keyword>
<keyword id="KW-0479">Metal-binding</keyword>
<keyword id="KW-0547">Nucleotide-binding</keyword>
<keyword id="KW-0648">Protein biosynthesis</keyword>
<keyword id="KW-0862">Zinc</keyword>
<proteinExistence type="inferred from homology"/>